<gene>
    <name evidence="1" type="primary">fda</name>
    <name type="ordered locus">Cbei_3039</name>
</gene>
<accession>A6LXU8</accession>
<name>ALF1_CLOB8</name>
<feature type="chain" id="PRO_1000083323" description="Fructose-bisphosphate aldolase class 1">
    <location>
        <begin position="1"/>
        <end position="295"/>
    </location>
</feature>
<feature type="active site" description="Proton acceptor" evidence="1">
    <location>
        <position position="176"/>
    </location>
</feature>
<feature type="active site" description="Schiff-base intermediate with dihydroxyacetone-P" evidence="1">
    <location>
        <position position="213"/>
    </location>
</feature>
<evidence type="ECO:0000255" key="1">
    <source>
        <dbReference type="HAMAP-Rule" id="MF_00729"/>
    </source>
</evidence>
<dbReference type="EC" id="4.1.2.13" evidence="1"/>
<dbReference type="EMBL" id="CP000721">
    <property type="protein sequence ID" value="ABR35178.1"/>
    <property type="molecule type" value="Genomic_DNA"/>
</dbReference>
<dbReference type="RefSeq" id="WP_012059231.1">
    <property type="nucleotide sequence ID" value="NC_009617.1"/>
</dbReference>
<dbReference type="SMR" id="A6LXU8"/>
<dbReference type="KEGG" id="cbe:Cbei_3039"/>
<dbReference type="eggNOG" id="COG3588">
    <property type="taxonomic scope" value="Bacteria"/>
</dbReference>
<dbReference type="HOGENOM" id="CLU_081560_0_0_9"/>
<dbReference type="UniPathway" id="UPA00109">
    <property type="reaction ID" value="UER00183"/>
</dbReference>
<dbReference type="Proteomes" id="UP000000565">
    <property type="component" value="Chromosome"/>
</dbReference>
<dbReference type="GO" id="GO:0004332">
    <property type="term" value="F:fructose-bisphosphate aldolase activity"/>
    <property type="evidence" value="ECO:0007669"/>
    <property type="project" value="UniProtKB-UniRule"/>
</dbReference>
<dbReference type="GO" id="GO:0006096">
    <property type="term" value="P:glycolytic process"/>
    <property type="evidence" value="ECO:0007669"/>
    <property type="project" value="UniProtKB-UniRule"/>
</dbReference>
<dbReference type="Gene3D" id="3.20.20.70">
    <property type="entry name" value="Aldolase class I"/>
    <property type="match status" value="1"/>
</dbReference>
<dbReference type="HAMAP" id="MF_00729">
    <property type="entry name" value="FBP_aldolase_1"/>
    <property type="match status" value="1"/>
</dbReference>
<dbReference type="InterPro" id="IPR013785">
    <property type="entry name" value="Aldolase_TIM"/>
</dbReference>
<dbReference type="InterPro" id="IPR000741">
    <property type="entry name" value="FBA_I"/>
</dbReference>
<dbReference type="InterPro" id="IPR023014">
    <property type="entry name" value="FBA_I_Gram+-type"/>
</dbReference>
<dbReference type="NCBIfam" id="NF003784">
    <property type="entry name" value="PRK05377.1"/>
    <property type="match status" value="1"/>
</dbReference>
<dbReference type="PANTHER" id="PTHR11627">
    <property type="entry name" value="FRUCTOSE-BISPHOSPHATE ALDOLASE"/>
    <property type="match status" value="1"/>
</dbReference>
<dbReference type="Pfam" id="PF00274">
    <property type="entry name" value="Glycolytic"/>
    <property type="match status" value="1"/>
</dbReference>
<dbReference type="SUPFAM" id="SSF51569">
    <property type="entry name" value="Aldolase"/>
    <property type="match status" value="1"/>
</dbReference>
<organism>
    <name type="scientific">Clostridium beijerinckii (strain ATCC 51743 / NCIMB 8052)</name>
    <name type="common">Clostridium acetobutylicum</name>
    <dbReference type="NCBI Taxonomy" id="290402"/>
    <lineage>
        <taxon>Bacteria</taxon>
        <taxon>Bacillati</taxon>
        <taxon>Bacillota</taxon>
        <taxon>Clostridia</taxon>
        <taxon>Eubacteriales</taxon>
        <taxon>Clostridiaceae</taxon>
        <taxon>Clostridium</taxon>
    </lineage>
</organism>
<keyword id="KW-0324">Glycolysis</keyword>
<keyword id="KW-0456">Lyase</keyword>
<keyword id="KW-0704">Schiff base</keyword>
<reference key="1">
    <citation type="submission" date="2007-06" db="EMBL/GenBank/DDBJ databases">
        <title>Complete sequence of Clostridium beijerinckii NCIMB 8052.</title>
        <authorList>
            <consortium name="US DOE Joint Genome Institute"/>
            <person name="Copeland A."/>
            <person name="Lucas S."/>
            <person name="Lapidus A."/>
            <person name="Barry K."/>
            <person name="Detter J.C."/>
            <person name="Glavina del Rio T."/>
            <person name="Hammon N."/>
            <person name="Israni S."/>
            <person name="Dalin E."/>
            <person name="Tice H."/>
            <person name="Pitluck S."/>
            <person name="Sims D."/>
            <person name="Brettin T."/>
            <person name="Bruce D."/>
            <person name="Tapia R."/>
            <person name="Brainard J."/>
            <person name="Schmutz J."/>
            <person name="Larimer F."/>
            <person name="Land M."/>
            <person name="Hauser L."/>
            <person name="Kyrpides N."/>
            <person name="Mikhailova N."/>
            <person name="Bennet G."/>
            <person name="Cann I."/>
            <person name="Chen J.-S."/>
            <person name="Contreras A.L."/>
            <person name="Jones D."/>
            <person name="Kashket E."/>
            <person name="Mitchell W."/>
            <person name="Stoddard S."/>
            <person name="Schwarz W."/>
            <person name="Qureshi N."/>
            <person name="Young M."/>
            <person name="Shi Z."/>
            <person name="Ezeji T."/>
            <person name="White B."/>
            <person name="Blaschek H."/>
            <person name="Richardson P."/>
        </authorList>
    </citation>
    <scope>NUCLEOTIDE SEQUENCE [LARGE SCALE GENOMIC DNA]</scope>
    <source>
        <strain>ATCC 51743 / NCIMB 8052</strain>
    </source>
</reference>
<comment type="catalytic activity">
    <reaction evidence="1">
        <text>beta-D-fructose 1,6-bisphosphate = D-glyceraldehyde 3-phosphate + dihydroxyacetone phosphate</text>
        <dbReference type="Rhea" id="RHEA:14729"/>
        <dbReference type="ChEBI" id="CHEBI:32966"/>
        <dbReference type="ChEBI" id="CHEBI:57642"/>
        <dbReference type="ChEBI" id="CHEBI:59776"/>
        <dbReference type="EC" id="4.1.2.13"/>
    </reaction>
</comment>
<comment type="pathway">
    <text evidence="1">Carbohydrate degradation; glycolysis; D-glyceraldehyde 3-phosphate and glycerone phosphate from D-glucose: step 4/4.</text>
</comment>
<comment type="similarity">
    <text evidence="1">Belongs to the class I fructose-bisphosphate aldolase family.</text>
</comment>
<protein>
    <recommendedName>
        <fullName evidence="1">Fructose-bisphosphate aldolase class 1</fullName>
        <ecNumber evidence="1">4.1.2.13</ecNumber>
    </recommendedName>
    <alternativeName>
        <fullName>Fructose-bisphosphate aldolase class I</fullName>
        <shortName evidence="1">FBP aldolase</shortName>
    </alternativeName>
</protein>
<sequence length="295" mass="33349">MNENQMKRIHTGKGFIAALDQSGGSTPKALLEYGIKENSYSNEDEMFGLVHEMRKRIIKSPAFTLEYILGAILFEDTMYRTIDNQYTPDYLWKEKNIVPFLKVDKGLTEIENGVQLMKPISNLDDLLKHAVEKNIFGTKMRSVIKEANAKGIKMLVNQQFEIGKQIVEAGLVPIIEPEVDIHSTDKEESEKLLKLEILEQLSKLDKETKVMLKLSIPTQDNFYIDLIDDPHVVRVVALSGGYSQAEAKERLGRNHGLIASFSRALSQGLTAQQTEEEFNGTISKSIKEIYEASIK</sequence>
<proteinExistence type="inferred from homology"/>